<keyword id="KW-0131">Cell cycle</keyword>
<keyword id="KW-0132">Cell division</keyword>
<keyword id="KW-1003">Cell membrane</keyword>
<keyword id="KW-0472">Membrane</keyword>
<keyword id="KW-0812">Transmembrane</keyword>
<keyword id="KW-1133">Transmembrane helix</keyword>
<dbReference type="EMBL" id="BX251410">
    <property type="protein sequence ID" value="CAD66702.1"/>
    <property type="molecule type" value="Genomic_DNA"/>
</dbReference>
<dbReference type="RefSeq" id="WP_011095983.1">
    <property type="nucleotide sequence ID" value="NC_004551.1"/>
</dbReference>
<dbReference type="SMR" id="P67379"/>
<dbReference type="GeneID" id="67387790"/>
<dbReference type="KEGG" id="tws:TW010"/>
<dbReference type="HOGENOM" id="CLU_149126_1_0_11"/>
<dbReference type="GO" id="GO:0005886">
    <property type="term" value="C:plasma membrane"/>
    <property type="evidence" value="ECO:0007669"/>
    <property type="project" value="UniProtKB-SubCell"/>
</dbReference>
<dbReference type="GO" id="GO:0051301">
    <property type="term" value="P:cell division"/>
    <property type="evidence" value="ECO:0007669"/>
    <property type="project" value="UniProtKB-UniRule"/>
</dbReference>
<dbReference type="HAMAP" id="MF_00631">
    <property type="entry name" value="CrgA"/>
    <property type="match status" value="1"/>
</dbReference>
<dbReference type="InterPro" id="IPR009619">
    <property type="entry name" value="CrgA"/>
</dbReference>
<dbReference type="NCBIfam" id="NF002596">
    <property type="entry name" value="PRK02251.2-2"/>
    <property type="match status" value="1"/>
</dbReference>
<dbReference type="Pfam" id="PF06781">
    <property type="entry name" value="CrgA"/>
    <property type="match status" value="1"/>
</dbReference>
<name>CRGA_TROW8</name>
<organism>
    <name type="scientific">Tropheryma whipplei (strain TW08/27)</name>
    <name type="common">Whipple's bacillus</name>
    <dbReference type="NCBI Taxonomy" id="218496"/>
    <lineage>
        <taxon>Bacteria</taxon>
        <taxon>Bacillati</taxon>
        <taxon>Actinomycetota</taxon>
        <taxon>Actinomycetes</taxon>
        <taxon>Micrococcales</taxon>
        <taxon>Tropherymataceae</taxon>
        <taxon>Tropheryma</taxon>
    </lineage>
</organism>
<proteinExistence type="inferred from homology"/>
<comment type="function">
    <text evidence="1">Involved in cell division.</text>
</comment>
<comment type="subcellular location">
    <subcellularLocation>
        <location evidence="1">Cell membrane</location>
        <topology evidence="1">Multi-pass membrane protein</topology>
    </subcellularLocation>
</comment>
<comment type="similarity">
    <text evidence="1">Belongs to the CrgA family.</text>
</comment>
<protein>
    <recommendedName>
        <fullName evidence="1">Cell division protein CrgA</fullName>
    </recommendedName>
</protein>
<sequence length="69" mass="7723">MSRKKHESSENNPVWFPTIMFGLMGTGAVWMVLFYISNGALPLPAVGTWNILIAFGIIMAGFAMMSRWK</sequence>
<reference key="1">
    <citation type="journal article" date="2003" name="Lancet">
        <title>Sequencing and analysis of the genome of the Whipple's disease bacterium Tropheryma whipplei.</title>
        <authorList>
            <person name="Bentley S.D."/>
            <person name="Maiwald M."/>
            <person name="Murphy L.D."/>
            <person name="Pallen M.J."/>
            <person name="Yeats C.A."/>
            <person name="Dover L.G."/>
            <person name="Norbertczak H.T."/>
            <person name="Besra G.S."/>
            <person name="Quail M.A."/>
            <person name="Harris D.E."/>
            <person name="von Herbay A."/>
            <person name="Goble A."/>
            <person name="Rutter S."/>
            <person name="Squares R."/>
            <person name="Squares S."/>
            <person name="Barrell B.G."/>
            <person name="Parkhill J."/>
            <person name="Relman D.A."/>
        </authorList>
    </citation>
    <scope>NUCLEOTIDE SEQUENCE [LARGE SCALE GENOMIC DNA]</scope>
    <source>
        <strain>TW08/27</strain>
    </source>
</reference>
<feature type="chain" id="PRO_0000216819" description="Cell division protein CrgA">
    <location>
        <begin position="1"/>
        <end position="69"/>
    </location>
</feature>
<feature type="transmembrane region" description="Helical" evidence="1">
    <location>
        <begin position="14"/>
        <end position="34"/>
    </location>
</feature>
<feature type="transmembrane region" description="Helical" evidence="1">
    <location>
        <begin position="45"/>
        <end position="65"/>
    </location>
</feature>
<evidence type="ECO:0000255" key="1">
    <source>
        <dbReference type="HAMAP-Rule" id="MF_00631"/>
    </source>
</evidence>
<accession>P67379</accession>
<accession>P59486</accession>
<gene>
    <name evidence="1" type="primary">crgA</name>
    <name type="ordered locus">TW010</name>
</gene>